<reference key="1">
    <citation type="journal article" date="2006" name="Mol. Microbiol.">
        <title>Role of pathogenicity island-associated integrases in the genome plasticity of uropathogenic Escherichia coli strain 536.</title>
        <authorList>
            <person name="Hochhut B."/>
            <person name="Wilde C."/>
            <person name="Balling G."/>
            <person name="Middendorf B."/>
            <person name="Dobrindt U."/>
            <person name="Brzuszkiewicz E."/>
            <person name="Gottschalk G."/>
            <person name="Carniel E."/>
            <person name="Hacker J."/>
        </authorList>
    </citation>
    <scope>NUCLEOTIDE SEQUENCE [LARGE SCALE GENOMIC DNA]</scope>
    <source>
        <strain>536 / UPEC</strain>
    </source>
</reference>
<feature type="signal peptide" evidence="1">
    <location>
        <begin position="1"/>
        <end position="28"/>
    </location>
</feature>
<feature type="chain" id="PRO_0000300224" description="UPF0482 protein YnfB">
    <location>
        <begin position="29"/>
        <end position="113"/>
    </location>
</feature>
<accession>Q0THP1</accession>
<organism>
    <name type="scientific">Escherichia coli O6:K15:H31 (strain 536 / UPEC)</name>
    <dbReference type="NCBI Taxonomy" id="362663"/>
    <lineage>
        <taxon>Bacteria</taxon>
        <taxon>Pseudomonadati</taxon>
        <taxon>Pseudomonadota</taxon>
        <taxon>Gammaproteobacteria</taxon>
        <taxon>Enterobacterales</taxon>
        <taxon>Enterobacteriaceae</taxon>
        <taxon>Escherichia</taxon>
    </lineage>
</organism>
<proteinExistence type="inferred from homology"/>
<protein>
    <recommendedName>
        <fullName evidence="1">UPF0482 protein YnfB</fullName>
    </recommendedName>
</protein>
<dbReference type="EMBL" id="CP000247">
    <property type="protein sequence ID" value="ABG69538.1"/>
    <property type="molecule type" value="Genomic_DNA"/>
</dbReference>
<dbReference type="RefSeq" id="WP_000705201.1">
    <property type="nucleotide sequence ID" value="NC_008253.1"/>
</dbReference>
<dbReference type="KEGG" id="ecp:ECP_1531"/>
<dbReference type="HOGENOM" id="CLU_167574_0_0_6"/>
<dbReference type="Proteomes" id="UP000009182">
    <property type="component" value="Chromosome"/>
</dbReference>
<dbReference type="HAMAP" id="MF_01581">
    <property type="entry name" value="UPF0482"/>
    <property type="match status" value="1"/>
</dbReference>
<dbReference type="InterPro" id="IPR009700">
    <property type="entry name" value="DUF1283"/>
</dbReference>
<dbReference type="NCBIfam" id="NF010180">
    <property type="entry name" value="PRK13659.1"/>
    <property type="match status" value="1"/>
</dbReference>
<dbReference type="Pfam" id="PF06932">
    <property type="entry name" value="DUF1283"/>
    <property type="match status" value="1"/>
</dbReference>
<sequence length="113" mass="12974">MKITLSKRIGLLAFLLPCALALSTTVHAETNKLVIESGDSAQSRQRAAMEKEQWNDTRNLRQKVNKRTEKEWDKADAAFDNRDKCEQSANINAYWEPNTLRCLDRRTGRVIIP</sequence>
<gene>
    <name evidence="1" type="primary">ynfB</name>
    <name type="ordered locus">ECP_1531</name>
</gene>
<name>YNFB_ECOL5</name>
<evidence type="ECO:0000255" key="1">
    <source>
        <dbReference type="HAMAP-Rule" id="MF_01581"/>
    </source>
</evidence>
<keyword id="KW-0732">Signal</keyword>
<comment type="similarity">
    <text evidence="1">Belongs to the UPF0482 family.</text>
</comment>